<keyword id="KW-0010">Activator</keyword>
<keyword id="KW-0244">Early protein</keyword>
<keyword id="KW-0597">Phosphoprotein</keyword>
<keyword id="KW-1185">Reference proteome</keyword>
<keyword id="KW-0804">Transcription</keyword>
<keyword id="KW-0805">Transcription regulation</keyword>
<dbReference type="EMBL" id="MT903340">
    <property type="protein sequence ID" value="QNP13005.1"/>
    <property type="molecule type" value="Genomic_DNA"/>
</dbReference>
<dbReference type="RefSeq" id="YP_010377132.1">
    <property type="nucleotide sequence ID" value="NC_063383.1"/>
</dbReference>
<dbReference type="SMR" id="A0A7H0DNC2"/>
<dbReference type="GeneID" id="72551545"/>
<dbReference type="Proteomes" id="UP000516359">
    <property type="component" value="Genome"/>
</dbReference>
<dbReference type="InterPro" id="IPR008789">
    <property type="entry name" value="Poxvirus_intermed-TF"/>
</dbReference>
<dbReference type="Pfam" id="PF05718">
    <property type="entry name" value="Pox_int_trans"/>
    <property type="match status" value="1"/>
</dbReference>
<gene>
    <name type="primary">OPG150</name>
    <name type="synonym">VITF3L</name>
    <name type="ORF">MPXVgp134</name>
</gene>
<feature type="chain" id="PRO_0000457527" description="Intermediate transcription factor 3 large subunit">
    <location>
        <begin position="1"/>
        <end position="382"/>
    </location>
</feature>
<proteinExistence type="evidence at transcript level"/>
<accession>A0A7H0DNC2</accession>
<organismHost>
    <name type="scientific">Cynomys gunnisoni</name>
    <name type="common">Gunnison's prairie dog</name>
    <name type="synonym">Spermophilus gunnisoni</name>
    <dbReference type="NCBI Taxonomy" id="45479"/>
</organismHost>
<organismHost>
    <name type="scientific">Cynomys leucurus</name>
    <name type="common">White-tailed prairie dog</name>
    <dbReference type="NCBI Taxonomy" id="99825"/>
</organismHost>
<organismHost>
    <name type="scientific">Cynomys ludovicianus</name>
    <name type="common">Black-tailed prairie dog</name>
    <dbReference type="NCBI Taxonomy" id="45480"/>
</organismHost>
<organismHost>
    <name type="scientific">Cynomys mexicanus</name>
    <name type="common">Mexican prairie dog</name>
    <dbReference type="NCBI Taxonomy" id="99826"/>
</organismHost>
<organismHost>
    <name type="scientific">Cynomys parvidens</name>
    <name type="common">Utah prairie dog</name>
    <dbReference type="NCBI Taxonomy" id="99827"/>
</organismHost>
<organismHost>
    <name type="scientific">Gliridae</name>
    <name type="common">dormice</name>
    <dbReference type="NCBI Taxonomy" id="30650"/>
</organismHost>
<organismHost>
    <name type="scientific">Heliosciurus ruwenzorii</name>
    <name type="common">Ruwenzori sun squirrel</name>
    <dbReference type="NCBI Taxonomy" id="226685"/>
</organismHost>
<organismHost>
    <name type="scientific">Homo sapiens</name>
    <name type="common">Human</name>
    <dbReference type="NCBI Taxonomy" id="9606"/>
</organismHost>
<organismHost>
    <name type="scientific">Mus musculus</name>
    <name type="common">Mouse</name>
    <dbReference type="NCBI Taxonomy" id="10090"/>
</organismHost>
<protein>
    <recommendedName>
        <fullName>Intermediate transcription factor 3 large subunit</fullName>
    </recommendedName>
</protein>
<evidence type="ECO:0000250" key="1">
    <source>
        <dbReference type="UniProtKB" id="Q80HV2"/>
    </source>
</evidence>
<evidence type="ECO:0000305" key="2"/>
<sequence length="382" mass="44508">MDNLFTFLHEIEDRYARTIFNFHLISCDEIGDIYGLMKERISSEDMFDNIVYNKDIHPAIKKLVYCDIQLTKHIINQNTYPVFNDSSQVKCCHYFDINSNNSNISSRTVEIFESEKSSLVSYIKTTNKKRKVNYGEIKKTVHGGTNANYFSGKKSDEYLSTTVRSNINQPWIKTISKRMRVDIINHSIVTRGKSSILQTIEIIFTNRTCVKIFKDSTMHIILSKDKDEKGCINMIDKLFYVYYNLFLLFEDIIQNDYFKEVANVVNHVLMATALDEKLFLIKKMAEHDVYGVSNFKIGMFNLTFIKSLDHTVFPSLLDEDSKIKFFKGKKLNIVALRSLEDCTNYVTKSENMIEMMKERSTILNSIDIETESVDRLKELLLK</sequence>
<organism>
    <name type="scientific">Monkeypox virus</name>
    <dbReference type="NCBI Taxonomy" id="10244"/>
    <lineage>
        <taxon>Viruses</taxon>
        <taxon>Varidnaviria</taxon>
        <taxon>Bamfordvirae</taxon>
        <taxon>Nucleocytoviricota</taxon>
        <taxon>Pokkesviricetes</taxon>
        <taxon>Chitovirales</taxon>
        <taxon>Poxviridae</taxon>
        <taxon>Chordopoxvirinae</taxon>
        <taxon>Orthopoxvirus</taxon>
    </lineage>
</organism>
<reference key="1">
    <citation type="journal article" date="2022" name="J. Infect. Dis.">
        <title>Exportation of Monkeypox virus from the African continent.</title>
        <authorList>
            <person name="Mauldin M.R."/>
            <person name="McCollum A.M."/>
            <person name="Nakazawa Y.J."/>
            <person name="Mandra A."/>
            <person name="Whitehouse E.R."/>
            <person name="Davidson W."/>
            <person name="Zhao H."/>
            <person name="Gao J."/>
            <person name="Li Y."/>
            <person name="Doty J."/>
            <person name="Yinka-Ogunleye A."/>
            <person name="Akinpelu A."/>
            <person name="Aruna O."/>
            <person name="Naidoo D."/>
            <person name="Lewandowski K."/>
            <person name="Afrough B."/>
            <person name="Graham V."/>
            <person name="Aarons E."/>
            <person name="Hewson R."/>
            <person name="Vipond R."/>
            <person name="Dunning J."/>
            <person name="Chand M."/>
            <person name="Brown C."/>
            <person name="Cohen-Gihon I."/>
            <person name="Erez N."/>
            <person name="Shifman O."/>
            <person name="Israeli O."/>
            <person name="Sharon M."/>
            <person name="Schwartz E."/>
            <person name="Beth-Din A."/>
            <person name="Zvi A."/>
            <person name="Mak T.M."/>
            <person name="Ng Y.K."/>
            <person name="Cui L."/>
            <person name="Lin R.T.P."/>
            <person name="Olson V.A."/>
            <person name="Brooks T."/>
            <person name="Paran N."/>
            <person name="Ihekweazu C."/>
            <person name="Reynolds M.G."/>
        </authorList>
    </citation>
    <scope>NUCLEOTIDE SEQUENCE [LARGE SCALE GENOMIC DNA]</scope>
    <source>
        <strain>MPXV-M5312_HM12_Rivers</strain>
    </source>
</reference>
<name>VITF3_MONPV</name>
<comment type="function">
    <text evidence="1">Acts with RNA polymerase to initiate transcription from intermediate gene promoters.</text>
</comment>
<comment type="subunit">
    <text evidence="1">Heterodimerizes with protein A8 to form the virus intermediate transcription factor (VITF)-3.</text>
</comment>
<comment type="induction">
    <text>Expressed in the early phase of the viral replicative cycle.</text>
</comment>
<comment type="similarity">
    <text evidence="2">Belongs to the orthopoxvirus OPG150 family.</text>
</comment>